<proteinExistence type="predicted"/>
<dbReference type="EMBL" id="AE000790">
    <property type="protein sequence ID" value="AAC66237.1"/>
    <property type="molecule type" value="Genomic_DNA"/>
</dbReference>
<dbReference type="EMBL" id="L31427">
    <property type="protein sequence ID" value="AAA64896.1"/>
    <property type="molecule type" value="Genomic_DNA"/>
</dbReference>
<dbReference type="PIR" id="D70213">
    <property type="entry name" value="D70213"/>
</dbReference>
<dbReference type="RefSeq" id="NP_045725.1">
    <property type="nucleotide sequence ID" value="NC_001857.2"/>
</dbReference>
<dbReference type="RefSeq" id="WP_010890390.1">
    <property type="nucleotide sequence ID" value="NC_001857.2"/>
</dbReference>
<dbReference type="EnsemblBacteria" id="AAC66237">
    <property type="protein sequence ID" value="AAC66237"/>
    <property type="gene ID" value="BB_A52"/>
</dbReference>
<dbReference type="KEGG" id="bbu:BB_A52"/>
<dbReference type="PATRIC" id="fig|224326.49.peg.1566"/>
<dbReference type="HOGENOM" id="CLU_1040783_0_0_12"/>
<dbReference type="OrthoDB" id="352241at2"/>
<dbReference type="Proteomes" id="UP000001807">
    <property type="component" value="Plasmid lp54"/>
</dbReference>
<dbReference type="GO" id="GO:0009279">
    <property type="term" value="C:cell outer membrane"/>
    <property type="evidence" value="ECO:0007669"/>
    <property type="project" value="UniProtKB-SubCell"/>
</dbReference>
<gene>
    <name type="ordered locus">BB_A52</name>
</gene>
<evidence type="ECO:0000256" key="1">
    <source>
        <dbReference type="SAM" id="MobiDB-lite"/>
    </source>
</evidence>
<evidence type="ECO:0000305" key="2"/>
<keyword id="KW-0998">Cell outer membrane</keyword>
<keyword id="KW-0472">Membrane</keyword>
<keyword id="KW-0614">Plasmid</keyword>
<keyword id="KW-1185">Reference proteome</keyword>
<organism>
    <name type="scientific">Borreliella burgdorferi (strain ATCC 35210 / DSM 4680 / CIP 102532 / B31)</name>
    <name type="common">Borrelia burgdorferi</name>
    <dbReference type="NCBI Taxonomy" id="224326"/>
    <lineage>
        <taxon>Bacteria</taxon>
        <taxon>Pseudomonadati</taxon>
        <taxon>Spirochaetota</taxon>
        <taxon>Spirochaetia</taxon>
        <taxon>Spirochaetales</taxon>
        <taxon>Borreliaceae</taxon>
        <taxon>Borreliella</taxon>
    </lineage>
</organism>
<comment type="subcellular location">
    <subcellularLocation>
        <location evidence="2">Cell outer membrane</location>
        <topology evidence="2">Peripheral membrane protein</topology>
    </subcellularLocation>
</comment>
<sequence>MIKFKLILIFFLFIVSTTYASVARPFDFRKWNFKKDIDLAYVLMHDLDNGILIKSQDKAGSIKSQEVLTKLNALNAYCNNLQRIIKAKLVRGRFQKEVELPLLKIIRKYKYLTRNYKNKSLIENPEYTKLIAERIIKKALFLENYFQSNRLKNVKSGENIKKRISDNQSKLKSLRSKPNKSVGSKFSKNSRPSKSPQGVKKCNKRRILDKYDLNGAESEFLDDPSQESDELEREYQDDELESEDPDDGEREYQDDRESRDDTFNEDQSEDEFFDSLEDQFI</sequence>
<feature type="chain" id="PRO_0000174422" description="Putative outer membrane protein BBA52">
    <location>
        <begin position="1"/>
        <end position="281"/>
    </location>
</feature>
<feature type="region of interest" description="Disordered" evidence="1">
    <location>
        <begin position="162"/>
        <end position="281"/>
    </location>
</feature>
<feature type="compositionally biased region" description="Polar residues" evidence="1">
    <location>
        <begin position="179"/>
        <end position="196"/>
    </location>
</feature>
<feature type="compositionally biased region" description="Acidic residues" evidence="1">
    <location>
        <begin position="219"/>
        <end position="249"/>
    </location>
</feature>
<feature type="compositionally biased region" description="Basic and acidic residues" evidence="1">
    <location>
        <begin position="250"/>
        <end position="262"/>
    </location>
</feature>
<feature type="compositionally biased region" description="Acidic residues" evidence="1">
    <location>
        <begin position="263"/>
        <end position="281"/>
    </location>
</feature>
<protein>
    <recommendedName>
        <fullName>Putative outer membrane protein BBA52</fullName>
    </recommendedName>
</protein>
<name>Y2552_BORBU</name>
<reference key="1">
    <citation type="journal article" date="1997" name="Nature">
        <title>Genomic sequence of a Lyme disease spirochaete, Borrelia burgdorferi.</title>
        <authorList>
            <person name="Fraser C.M."/>
            <person name="Casjens S."/>
            <person name="Huang W.M."/>
            <person name="Sutton G.G."/>
            <person name="Clayton R.A."/>
            <person name="Lathigra R."/>
            <person name="White O."/>
            <person name="Ketchum K.A."/>
            <person name="Dodson R.J."/>
            <person name="Hickey E.K."/>
            <person name="Gwinn M.L."/>
            <person name="Dougherty B.A."/>
            <person name="Tomb J.-F."/>
            <person name="Fleischmann R.D."/>
            <person name="Richardson D.L."/>
            <person name="Peterson J.D."/>
            <person name="Kerlavage A.R."/>
            <person name="Quackenbush J."/>
            <person name="Salzberg S.L."/>
            <person name="Hanson M."/>
            <person name="van Vugt R."/>
            <person name="Palmer N."/>
            <person name="Adams M.D."/>
            <person name="Gocayne J.D."/>
            <person name="Weidman J.F."/>
            <person name="Utterback T.R."/>
            <person name="Watthey L."/>
            <person name="McDonald L.A."/>
            <person name="Artiach P."/>
            <person name="Bowman C."/>
            <person name="Garland S.A."/>
            <person name="Fujii C."/>
            <person name="Cotton M.D."/>
            <person name="Horst K."/>
            <person name="Roberts K.M."/>
            <person name="Hatch B."/>
            <person name="Smith H.O."/>
            <person name="Venter J.C."/>
        </authorList>
    </citation>
    <scope>NUCLEOTIDE SEQUENCE [LARGE SCALE GENOMIC DNA]</scope>
    <source>
        <strain>ATCC 35210 / DSM 4680 / CIP 102532 / B31</strain>
    </source>
</reference>
<reference key="2">
    <citation type="submission" date="1994-08" db="EMBL/GenBank/DDBJ databases">
        <authorList>
            <person name="Akins D.R."/>
            <person name="Popova T."/>
            <person name="Brusca J."/>
            <person name="Goldberg M.L."/>
            <person name="Li M."/>
            <person name="Baker S.C."/>
            <person name="Norgard M.V."/>
            <person name="Radolf J.D."/>
        </authorList>
    </citation>
    <scope>NUCLEOTIDE SEQUENCE [GENOMIC DNA] OF 1-46</scope>
    <source>
        <strain>ATCC 53899 / 297</strain>
    </source>
</reference>
<accession>Q44845</accession>
<geneLocation type="plasmid">
    <name>lp54</name>
</geneLocation>